<name>DISA_CLOB8</name>
<feature type="chain" id="PRO_1000087444" description="DNA integrity scanning protein DisA">
    <location>
        <begin position="1"/>
        <end position="354"/>
    </location>
</feature>
<feature type="domain" description="DAC" evidence="2">
    <location>
        <begin position="6"/>
        <end position="144"/>
    </location>
</feature>
<feature type="binding site" evidence="1">
    <location>
        <position position="73"/>
    </location>
    <ligand>
        <name>ATP</name>
        <dbReference type="ChEBI" id="CHEBI:30616"/>
    </ligand>
</feature>
<feature type="binding site" evidence="1">
    <location>
        <position position="91"/>
    </location>
    <ligand>
        <name>ATP</name>
        <dbReference type="ChEBI" id="CHEBI:30616"/>
    </ligand>
</feature>
<feature type="binding site" evidence="1">
    <location>
        <begin position="104"/>
        <end position="108"/>
    </location>
    <ligand>
        <name>ATP</name>
        <dbReference type="ChEBI" id="CHEBI:30616"/>
    </ligand>
</feature>
<sequence length="354" mass="39832">MRIEKGIGIKNVLKIMCPGTQLREGLENILRAKTGGLLVIGDDEEVMKLVDGGFYINSEYTPSYAYELAKMDGAIVITGDLKKIVCANAQLIPDSSIPTYETGTRHRTAHRVAKQTNNIVIAISQRRNIITMYKGDIKYVLRESSVILGKANQALQTLEKYVAVLERVINNLNLLEFQDLTTLFDVVTAIQRTEMVMRIVEEINMYILELGNEGRLISMQLNELVKHIERDGILLIRDYCKDGLQYNEVYEHIQKLNSSELLELDAVARTLGRGGIPLMDTLISPKGYRMLSKVPRIPSNVIDNLIKEFEELSNIIDADINDLDNVEGIGEARATAIKDGLKRIKEQVSLKKEI</sequence>
<evidence type="ECO:0000255" key="1">
    <source>
        <dbReference type="HAMAP-Rule" id="MF_01438"/>
    </source>
</evidence>
<evidence type="ECO:0000255" key="2">
    <source>
        <dbReference type="PROSITE-ProRule" id="PRU01130"/>
    </source>
</evidence>
<proteinExistence type="inferred from homology"/>
<dbReference type="EC" id="2.7.7.85" evidence="1"/>
<dbReference type="EMBL" id="CP000721">
    <property type="protein sequence ID" value="ABR32317.1"/>
    <property type="molecule type" value="Genomic_DNA"/>
</dbReference>
<dbReference type="RefSeq" id="WP_011967490.1">
    <property type="nucleotide sequence ID" value="NC_009617.1"/>
</dbReference>
<dbReference type="SMR" id="A6LPN7"/>
<dbReference type="KEGG" id="cbe:Cbei_0127"/>
<dbReference type="eggNOG" id="COG1623">
    <property type="taxonomic scope" value="Bacteria"/>
</dbReference>
<dbReference type="HOGENOM" id="CLU_787128_0_0_9"/>
<dbReference type="Proteomes" id="UP000000565">
    <property type="component" value="Chromosome"/>
</dbReference>
<dbReference type="GO" id="GO:0004016">
    <property type="term" value="F:adenylate cyclase activity"/>
    <property type="evidence" value="ECO:0007669"/>
    <property type="project" value="TreeGrafter"/>
</dbReference>
<dbReference type="GO" id="GO:0005524">
    <property type="term" value="F:ATP binding"/>
    <property type="evidence" value="ECO:0007669"/>
    <property type="project" value="UniProtKB-UniRule"/>
</dbReference>
<dbReference type="GO" id="GO:0106408">
    <property type="term" value="F:diadenylate cyclase activity"/>
    <property type="evidence" value="ECO:0007669"/>
    <property type="project" value="UniProtKB-EC"/>
</dbReference>
<dbReference type="GO" id="GO:0003677">
    <property type="term" value="F:DNA binding"/>
    <property type="evidence" value="ECO:0007669"/>
    <property type="project" value="UniProtKB-UniRule"/>
</dbReference>
<dbReference type="GO" id="GO:0006281">
    <property type="term" value="P:DNA repair"/>
    <property type="evidence" value="ECO:0007669"/>
    <property type="project" value="UniProtKB-UniRule"/>
</dbReference>
<dbReference type="FunFam" id="3.40.1700.10:FF:000001">
    <property type="entry name" value="DNA integrity scanning protein DisA"/>
    <property type="match status" value="1"/>
</dbReference>
<dbReference type="Gene3D" id="1.10.150.20">
    <property type="entry name" value="5' to 3' exonuclease, C-terminal subdomain"/>
    <property type="match status" value="1"/>
</dbReference>
<dbReference type="Gene3D" id="1.20.1260.110">
    <property type="entry name" value="DNA integrity scanning linker region"/>
    <property type="match status" value="1"/>
</dbReference>
<dbReference type="Gene3D" id="3.40.1700.10">
    <property type="entry name" value="DNA integrity scanning protein, DisA, N-terminal domain"/>
    <property type="match status" value="1"/>
</dbReference>
<dbReference type="HAMAP" id="MF_01438">
    <property type="entry name" value="DisA"/>
    <property type="match status" value="1"/>
</dbReference>
<dbReference type="InterPro" id="IPR050338">
    <property type="entry name" value="DisA"/>
</dbReference>
<dbReference type="InterPro" id="IPR038331">
    <property type="entry name" value="DisA_sf"/>
</dbReference>
<dbReference type="InterPro" id="IPR036888">
    <property type="entry name" value="DNA_integrity_DisA_N_sf"/>
</dbReference>
<dbReference type="InterPro" id="IPR018906">
    <property type="entry name" value="DNA_integrity_scan_DisA_link"/>
</dbReference>
<dbReference type="InterPro" id="IPR003390">
    <property type="entry name" value="DNA_integrity_scan_DisA_N"/>
</dbReference>
<dbReference type="InterPro" id="IPR023763">
    <property type="entry name" value="DNA_integrity_scanning_protein"/>
</dbReference>
<dbReference type="InterPro" id="IPR010994">
    <property type="entry name" value="RuvA_2-like"/>
</dbReference>
<dbReference type="NCBIfam" id="NF010009">
    <property type="entry name" value="PRK13482.1"/>
    <property type="match status" value="1"/>
</dbReference>
<dbReference type="PANTHER" id="PTHR34185">
    <property type="entry name" value="DIADENYLATE CYCLASE"/>
    <property type="match status" value="1"/>
</dbReference>
<dbReference type="PANTHER" id="PTHR34185:SF3">
    <property type="entry name" value="DNA INTEGRITY SCANNING PROTEIN DISA"/>
    <property type="match status" value="1"/>
</dbReference>
<dbReference type="Pfam" id="PF02457">
    <property type="entry name" value="DAC"/>
    <property type="match status" value="1"/>
</dbReference>
<dbReference type="Pfam" id="PF10635">
    <property type="entry name" value="DisA-linker"/>
    <property type="match status" value="1"/>
</dbReference>
<dbReference type="SUPFAM" id="SSF47781">
    <property type="entry name" value="RuvA domain 2-like"/>
    <property type="match status" value="1"/>
</dbReference>
<dbReference type="SUPFAM" id="SSF143597">
    <property type="entry name" value="YojJ-like"/>
    <property type="match status" value="1"/>
</dbReference>
<dbReference type="PROSITE" id="PS51794">
    <property type="entry name" value="DAC"/>
    <property type="match status" value="1"/>
</dbReference>
<protein>
    <recommendedName>
        <fullName evidence="1">DNA integrity scanning protein DisA</fullName>
    </recommendedName>
    <alternativeName>
        <fullName evidence="1">Cyclic di-AMP synthase</fullName>
        <shortName evidence="1">c-di-AMP synthase</shortName>
    </alternativeName>
    <alternativeName>
        <fullName evidence="1">Diadenylate cyclase</fullName>
        <ecNumber evidence="1">2.7.7.85</ecNumber>
    </alternativeName>
</protein>
<organism>
    <name type="scientific">Clostridium beijerinckii (strain ATCC 51743 / NCIMB 8052)</name>
    <name type="common">Clostridium acetobutylicum</name>
    <dbReference type="NCBI Taxonomy" id="290402"/>
    <lineage>
        <taxon>Bacteria</taxon>
        <taxon>Bacillati</taxon>
        <taxon>Bacillota</taxon>
        <taxon>Clostridia</taxon>
        <taxon>Eubacteriales</taxon>
        <taxon>Clostridiaceae</taxon>
        <taxon>Clostridium</taxon>
    </lineage>
</organism>
<gene>
    <name evidence="1" type="primary">disA</name>
    <name type="ordered locus">Cbei_0127</name>
</gene>
<accession>A6LPN7</accession>
<comment type="function">
    <text evidence="1">Participates in a DNA-damage check-point that is active prior to asymmetric division when DNA is damaged. DisA forms globular foci that rapidly scan along the chromosomes during sporulation, searching for lesions. When a lesion is present, DisA pauses at the lesion site. This triggers a cellular response that culminates in a temporary block in sporulation initiation.</text>
</comment>
<comment type="function">
    <text evidence="1">Also has diadenylate cyclase activity, catalyzing the condensation of 2 ATP molecules into cyclic di-AMP (c-di-AMP). c-di-AMP acts as a signaling molecule that couples DNA integrity with progression of sporulation. The rise in c-di-AMP level generated by DisA while scanning the chromosome, operates as a positive signal that advances sporulation; upon encountering a lesion, the DisA focus arrests at the damaged site and halts c-di-AMP synthesis.</text>
</comment>
<comment type="catalytic activity">
    <reaction evidence="1">
        <text>2 ATP = 3',3'-c-di-AMP + 2 diphosphate</text>
        <dbReference type="Rhea" id="RHEA:35655"/>
        <dbReference type="ChEBI" id="CHEBI:30616"/>
        <dbReference type="ChEBI" id="CHEBI:33019"/>
        <dbReference type="ChEBI" id="CHEBI:71500"/>
        <dbReference type="EC" id="2.7.7.85"/>
    </reaction>
</comment>
<comment type="cofactor">
    <cofactor evidence="1">
        <name>Mg(2+)</name>
        <dbReference type="ChEBI" id="CHEBI:18420"/>
    </cofactor>
</comment>
<comment type="subunit">
    <text evidence="1">Homooctamer.</text>
</comment>
<comment type="similarity">
    <text evidence="1">Belongs to the DisA family.</text>
</comment>
<keyword id="KW-0067">ATP-binding</keyword>
<keyword id="KW-0227">DNA damage</keyword>
<keyword id="KW-0234">DNA repair</keyword>
<keyword id="KW-0238">DNA-binding</keyword>
<keyword id="KW-0460">Magnesium</keyword>
<keyword id="KW-0547">Nucleotide-binding</keyword>
<keyword id="KW-0548">Nucleotidyltransferase</keyword>
<keyword id="KW-0808">Transferase</keyword>
<reference key="1">
    <citation type="submission" date="2007-06" db="EMBL/GenBank/DDBJ databases">
        <title>Complete sequence of Clostridium beijerinckii NCIMB 8052.</title>
        <authorList>
            <consortium name="US DOE Joint Genome Institute"/>
            <person name="Copeland A."/>
            <person name="Lucas S."/>
            <person name="Lapidus A."/>
            <person name="Barry K."/>
            <person name="Detter J.C."/>
            <person name="Glavina del Rio T."/>
            <person name="Hammon N."/>
            <person name="Israni S."/>
            <person name="Dalin E."/>
            <person name="Tice H."/>
            <person name="Pitluck S."/>
            <person name="Sims D."/>
            <person name="Brettin T."/>
            <person name="Bruce D."/>
            <person name="Tapia R."/>
            <person name="Brainard J."/>
            <person name="Schmutz J."/>
            <person name="Larimer F."/>
            <person name="Land M."/>
            <person name="Hauser L."/>
            <person name="Kyrpides N."/>
            <person name="Mikhailova N."/>
            <person name="Bennet G."/>
            <person name="Cann I."/>
            <person name="Chen J.-S."/>
            <person name="Contreras A.L."/>
            <person name="Jones D."/>
            <person name="Kashket E."/>
            <person name="Mitchell W."/>
            <person name="Stoddard S."/>
            <person name="Schwarz W."/>
            <person name="Qureshi N."/>
            <person name="Young M."/>
            <person name="Shi Z."/>
            <person name="Ezeji T."/>
            <person name="White B."/>
            <person name="Blaschek H."/>
            <person name="Richardson P."/>
        </authorList>
    </citation>
    <scope>NUCLEOTIDE SEQUENCE [LARGE SCALE GENOMIC DNA]</scope>
    <source>
        <strain>ATCC 51743 / NCIMB 8052</strain>
    </source>
</reference>